<protein>
    <recommendedName>
        <fullName evidence="1">Large ribosomal subunit protein eL39</fullName>
    </recommendedName>
    <alternativeName>
        <fullName evidence="3">50S ribosomal protein L39e</fullName>
    </alternativeName>
</protein>
<dbReference type="EMBL" id="CP000561">
    <property type="protein sequence ID" value="ABO08411.1"/>
    <property type="molecule type" value="Genomic_DNA"/>
</dbReference>
<dbReference type="RefSeq" id="WP_011849669.1">
    <property type="nucleotide sequence ID" value="NC_009073.1"/>
</dbReference>
<dbReference type="PDB" id="9E6Q">
    <property type="method" value="EM"/>
    <property type="resolution" value="1.95 A"/>
    <property type="chains" value="Af=1-51"/>
</dbReference>
<dbReference type="PDB" id="9E71">
    <property type="method" value="EM"/>
    <property type="resolution" value="2.36 A"/>
    <property type="chains" value="Af=1-51"/>
</dbReference>
<dbReference type="PDB" id="9E7F">
    <property type="method" value="EM"/>
    <property type="resolution" value="2.53 A"/>
    <property type="chains" value="Af=1-51"/>
</dbReference>
<dbReference type="PDBsum" id="9E6Q"/>
<dbReference type="PDBsum" id="9E71"/>
<dbReference type="PDBsum" id="9E7F"/>
<dbReference type="EMDB" id="EMD-47578"/>
<dbReference type="EMDB" id="EMD-47628"/>
<dbReference type="EMDB" id="EMD-47668"/>
<dbReference type="SMR" id="A3MUU4"/>
<dbReference type="STRING" id="410359.Pcal_0986"/>
<dbReference type="GeneID" id="4909621"/>
<dbReference type="KEGG" id="pcl:Pcal_0986"/>
<dbReference type="eggNOG" id="arCOG04177">
    <property type="taxonomic scope" value="Archaea"/>
</dbReference>
<dbReference type="HOGENOM" id="CLU_181948_4_0_2"/>
<dbReference type="OrthoDB" id="65887at2157"/>
<dbReference type="Proteomes" id="UP000001431">
    <property type="component" value="Chromosome"/>
</dbReference>
<dbReference type="GO" id="GO:1990904">
    <property type="term" value="C:ribonucleoprotein complex"/>
    <property type="evidence" value="ECO:0007669"/>
    <property type="project" value="UniProtKB-KW"/>
</dbReference>
<dbReference type="GO" id="GO:0005840">
    <property type="term" value="C:ribosome"/>
    <property type="evidence" value="ECO:0007669"/>
    <property type="project" value="UniProtKB-KW"/>
</dbReference>
<dbReference type="GO" id="GO:0003735">
    <property type="term" value="F:structural constituent of ribosome"/>
    <property type="evidence" value="ECO:0007669"/>
    <property type="project" value="InterPro"/>
</dbReference>
<dbReference type="GO" id="GO:0006412">
    <property type="term" value="P:translation"/>
    <property type="evidence" value="ECO:0007669"/>
    <property type="project" value="UniProtKB-UniRule"/>
</dbReference>
<dbReference type="Gene3D" id="1.10.1620.10">
    <property type="entry name" value="Ribosomal protein L39e"/>
    <property type="match status" value="1"/>
</dbReference>
<dbReference type="HAMAP" id="MF_00629">
    <property type="entry name" value="Ribosomal_eL39"/>
    <property type="match status" value="1"/>
</dbReference>
<dbReference type="InterPro" id="IPR000077">
    <property type="entry name" value="Ribosomal_eL39"/>
</dbReference>
<dbReference type="InterPro" id="IPR020083">
    <property type="entry name" value="Ribosomal_eL39_CS"/>
</dbReference>
<dbReference type="InterPro" id="IPR023626">
    <property type="entry name" value="Ribosomal_eL39_dom_sf"/>
</dbReference>
<dbReference type="NCBIfam" id="NF002316">
    <property type="entry name" value="PRK01242.1"/>
    <property type="match status" value="1"/>
</dbReference>
<dbReference type="Pfam" id="PF00832">
    <property type="entry name" value="Ribosomal_L39"/>
    <property type="match status" value="1"/>
</dbReference>
<dbReference type="SUPFAM" id="SSF48662">
    <property type="entry name" value="Ribosomal protein L39e"/>
    <property type="match status" value="1"/>
</dbReference>
<dbReference type="PROSITE" id="PS00051">
    <property type="entry name" value="RIBOSOMAL_L39E"/>
    <property type="match status" value="1"/>
</dbReference>
<gene>
    <name evidence="1" type="primary">rpl39e</name>
    <name type="ordered locus">Pcal_0986</name>
</gene>
<evidence type="ECO:0000255" key="1">
    <source>
        <dbReference type="HAMAP-Rule" id="MF_00629"/>
    </source>
</evidence>
<evidence type="ECO:0000256" key="2">
    <source>
        <dbReference type="SAM" id="MobiDB-lite"/>
    </source>
</evidence>
<evidence type="ECO:0000305" key="3"/>
<comment type="similarity">
    <text evidence="1">Belongs to the eukaryotic ribosomal protein eL39 family.</text>
</comment>
<keyword id="KW-0002">3D-structure</keyword>
<keyword id="KW-0687">Ribonucleoprotein</keyword>
<keyword id="KW-0689">Ribosomal protein</keyword>
<name>RL39_PYRCJ</name>
<reference key="1">
    <citation type="submission" date="2007-02" db="EMBL/GenBank/DDBJ databases">
        <title>Complete sequence of Pyrobaculum calidifontis JCM 11548.</title>
        <authorList>
            <consortium name="US DOE Joint Genome Institute"/>
            <person name="Copeland A."/>
            <person name="Lucas S."/>
            <person name="Lapidus A."/>
            <person name="Barry K."/>
            <person name="Glavina del Rio T."/>
            <person name="Dalin E."/>
            <person name="Tice H."/>
            <person name="Pitluck S."/>
            <person name="Chain P."/>
            <person name="Malfatti S."/>
            <person name="Shin M."/>
            <person name="Vergez L."/>
            <person name="Schmutz J."/>
            <person name="Larimer F."/>
            <person name="Land M."/>
            <person name="Hauser L."/>
            <person name="Kyrpides N."/>
            <person name="Mikhailova N."/>
            <person name="Cozen A.E."/>
            <person name="Fitz-Gibbon S.T."/>
            <person name="House C.H."/>
            <person name="Saltikov C."/>
            <person name="Lowe T.M."/>
            <person name="Richardson P."/>
        </authorList>
    </citation>
    <scope>NUCLEOTIDE SEQUENCE [LARGE SCALE GENOMIC DNA]</scope>
    <source>
        <strain>DSM 21063 / JCM 11548 / VA1</strain>
    </source>
</reference>
<feature type="chain" id="PRO_1000051694" description="Large ribosomal subunit protein eL39">
    <location>
        <begin position="1"/>
        <end position="51"/>
    </location>
</feature>
<feature type="region of interest" description="Disordered" evidence="2">
    <location>
        <begin position="32"/>
        <end position="51"/>
    </location>
</feature>
<organism>
    <name type="scientific">Pyrobaculum calidifontis (strain DSM 21063 / JCM 11548 / VA1)</name>
    <dbReference type="NCBI Taxonomy" id="410359"/>
    <lineage>
        <taxon>Archaea</taxon>
        <taxon>Thermoproteota</taxon>
        <taxon>Thermoprotei</taxon>
        <taxon>Thermoproteales</taxon>
        <taxon>Thermoproteaceae</taxon>
        <taxon>Pyrobaculum</taxon>
    </lineage>
</organism>
<proteinExistence type="evidence at protein level"/>
<accession>A3MUU4</accession>
<sequence>MARNKPLGKKLRLAAALNSNRNPPLWVIAKTKRRVTRSPARRHWRRQKLKA</sequence>